<comment type="function">
    <text evidence="5 6 7">Alanine aminotransferase involved in both alanine biosynthesis and utilization. Under respiratory conditions, constitutes the sole pathway for alanine biosynthesis and catabolism. Under fermentative conditions, it plays a catabolic role and alanine is mainly synthesized through an alternative pathway.</text>
</comment>
<comment type="catalytic activity">
    <reaction evidence="5">
        <text>L-alanine + 2-oxoglutarate = pyruvate + L-glutamate</text>
        <dbReference type="Rhea" id="RHEA:19453"/>
        <dbReference type="ChEBI" id="CHEBI:15361"/>
        <dbReference type="ChEBI" id="CHEBI:16810"/>
        <dbReference type="ChEBI" id="CHEBI:29985"/>
        <dbReference type="ChEBI" id="CHEBI:57972"/>
        <dbReference type="EC" id="2.6.1.2"/>
    </reaction>
    <physiologicalReaction direction="left-to-right" evidence="5">
        <dbReference type="Rhea" id="RHEA:19454"/>
    </physiologicalReaction>
    <physiologicalReaction direction="right-to-left" evidence="5">
        <dbReference type="Rhea" id="RHEA:19455"/>
    </physiologicalReaction>
</comment>
<comment type="cofactor">
    <cofactor>
        <name>pyridoxal 5'-phosphate</name>
        <dbReference type="ChEBI" id="CHEBI:597326"/>
    </cofactor>
</comment>
<comment type="pathway">
    <text evidence="9">Amino-acid degradation; L-alanine degradation via transaminase pathway; pyruvate from L-alanine: step 1/1.</text>
</comment>
<comment type="subunit">
    <text evidence="7">Homodimer.</text>
</comment>
<comment type="subcellular location">
    <subcellularLocation>
        <location evidence="3">Mitochondrion matrix</location>
    </subcellularLocation>
</comment>
<comment type="induction">
    <text evidence="5 6">Induced by alanine.</text>
</comment>
<comment type="miscellaneous">
    <text evidence="4">Present with 9960 molecules/cell in log phase SD medium.</text>
</comment>
<comment type="similarity">
    <text evidence="8">Belongs to the class-I pyridoxal-phosphate-dependent aminotransferase family. Alanine aminotransferase subfamily.</text>
</comment>
<sequence>MLSLSAKNHFTVSNSITHVIKSYHIRTLTSSAEKMPHITTPFSTSASSTKLKAFRKVRPVLQRHSSSWIVAQNHRRSLSGQSSLNDLRHLNRFPHHTLKTSNNEFYPAEQLTLEDVNENVLKAKYAVRGAIPMRAEELKAQLEKDPQSLPFDRIINANIGNPQQLQQKPLTYYRQVLSLLQYPELLNQNEQQLVDSKLFKLDAIKRAKSLMEDIGGSVGAYSSSQGVEGIRKSVAEFITKRDEGEISYPEDIFLTAGASAAVNYLLSIFCRGPETGVLIPIPQYPLYTATLALNNSQALPYYLDENSGWSTNPEEIETVVKEAIQNEIKPTVLVVINPGNPTGAVLSPESIAQIFEVAAKYGTVVIADEVYQENIFPGTKFHSMKKILRHLQREHPGKFDNVQLASLHSTSKGVSGECGQRGGYMELTGFSHEMRQVILKLASISLCPVVTGQALVDLMVRPPVEGEESFESDQAERNSIHEKLITRAMTLYETFNSLEGIECQKPQGAMYLFPKIDLPFKAVQEARHLELTPDEFYCKKLLESTGICTVPGSGFGQEPGTYHLRTTFLAPGLEWIKKWESFHKEFFDQYRD</sequence>
<reference key="1">
    <citation type="journal article" date="1997" name="Nature">
        <title>The nucleotide sequence of Saccharomyces cerevisiae chromosome XII.</title>
        <authorList>
            <person name="Johnston M."/>
            <person name="Hillier L.W."/>
            <person name="Riles L."/>
            <person name="Albermann K."/>
            <person name="Andre B."/>
            <person name="Ansorge W."/>
            <person name="Benes V."/>
            <person name="Brueckner M."/>
            <person name="Delius H."/>
            <person name="Dubois E."/>
            <person name="Duesterhoeft A."/>
            <person name="Entian K.-D."/>
            <person name="Floeth M."/>
            <person name="Goffeau A."/>
            <person name="Hebling U."/>
            <person name="Heumann K."/>
            <person name="Heuss-Neitzel D."/>
            <person name="Hilbert H."/>
            <person name="Hilger F."/>
            <person name="Kleine K."/>
            <person name="Koetter P."/>
            <person name="Louis E.J."/>
            <person name="Messenguy F."/>
            <person name="Mewes H.-W."/>
            <person name="Miosga T."/>
            <person name="Moestl D."/>
            <person name="Mueller-Auer S."/>
            <person name="Nentwich U."/>
            <person name="Obermaier B."/>
            <person name="Piravandi E."/>
            <person name="Pohl T.M."/>
            <person name="Portetelle D."/>
            <person name="Purnelle B."/>
            <person name="Rechmann S."/>
            <person name="Rieger M."/>
            <person name="Rinke M."/>
            <person name="Rose M."/>
            <person name="Scharfe M."/>
            <person name="Scherens B."/>
            <person name="Scholler P."/>
            <person name="Schwager C."/>
            <person name="Schwarz S."/>
            <person name="Underwood A.P."/>
            <person name="Urrestarazu L.A."/>
            <person name="Vandenbol M."/>
            <person name="Verhasselt P."/>
            <person name="Vierendeels F."/>
            <person name="Voet M."/>
            <person name="Volckaert G."/>
            <person name="Voss H."/>
            <person name="Wambutt R."/>
            <person name="Wedler E."/>
            <person name="Wedler H."/>
            <person name="Zimmermann F.K."/>
            <person name="Zollner A."/>
            <person name="Hani J."/>
            <person name="Hoheisel J.D."/>
        </authorList>
    </citation>
    <scope>NUCLEOTIDE SEQUENCE [LARGE SCALE GENOMIC DNA]</scope>
    <source>
        <strain>ATCC 204508 / S288c</strain>
    </source>
</reference>
<reference key="2">
    <citation type="journal article" date="2014" name="G3 (Bethesda)">
        <title>The reference genome sequence of Saccharomyces cerevisiae: Then and now.</title>
        <authorList>
            <person name="Engel S.R."/>
            <person name="Dietrich F.S."/>
            <person name="Fisk D.G."/>
            <person name="Binkley G."/>
            <person name="Balakrishnan R."/>
            <person name="Costanzo M.C."/>
            <person name="Dwight S.S."/>
            <person name="Hitz B.C."/>
            <person name="Karra K."/>
            <person name="Nash R.S."/>
            <person name="Weng S."/>
            <person name="Wong E.D."/>
            <person name="Lloyd P."/>
            <person name="Skrzypek M.S."/>
            <person name="Miyasato S.R."/>
            <person name="Simison M."/>
            <person name="Cherry J.M."/>
        </authorList>
    </citation>
    <scope>GENOME REANNOTATION</scope>
    <source>
        <strain>ATCC 204508 / S288c</strain>
    </source>
</reference>
<reference key="3">
    <citation type="journal article" date="2001" name="Biochemistry">
        <title>Yeast mitochondrial dehydrogenases are associated in a supramolecular complex.</title>
        <authorList>
            <person name="Grandier-Vazeille X."/>
            <person name="Bathany K."/>
            <person name="Chaignepain S."/>
            <person name="Camougrand N."/>
            <person name="Manon S."/>
            <person name="Schmitter J.-M."/>
        </authorList>
    </citation>
    <scope>SUBCELLULAR LOCATION</scope>
</reference>
<reference key="4">
    <citation type="journal article" date="2003" name="Nature">
        <title>Global analysis of protein expression in yeast.</title>
        <authorList>
            <person name="Ghaemmaghami S."/>
            <person name="Huh W.-K."/>
            <person name="Bower K."/>
            <person name="Howson R.W."/>
            <person name="Belle A."/>
            <person name="Dephoure N."/>
            <person name="O'Shea E.K."/>
            <person name="Weissman J.S."/>
        </authorList>
    </citation>
    <scope>LEVEL OF PROTEIN EXPRESSION [LARGE SCALE ANALYSIS]</scope>
</reference>
<reference key="5">
    <citation type="journal article" date="2009" name="Can. J. Microbiol.">
        <title>ALT1-encoded alanine aminotransferase plays a central role in the metabolism of alanine in Saccharomyces cerevisiae.</title>
        <authorList>
            <person name="Garcia-Campusano F."/>
            <person name="Anaya V.H."/>
            <person name="Robledo-Arratia L."/>
            <person name="Quezada H."/>
            <person name="Hernandez H."/>
            <person name="Riego L."/>
            <person name="Gonzalez A."/>
        </authorList>
    </citation>
    <scope>FUNCTION</scope>
    <scope>CATALYTIC ACTIVITY</scope>
    <scope>PATHWAY</scope>
    <scope>INDUCTION</scope>
</reference>
<reference key="6">
    <citation type="journal article" date="2009" name="Science">
        <title>Global analysis of Cdk1 substrate phosphorylation sites provides insights into evolution.</title>
        <authorList>
            <person name="Holt L.J."/>
            <person name="Tuch B.B."/>
            <person name="Villen J."/>
            <person name="Johnson A.D."/>
            <person name="Gygi S.P."/>
            <person name="Morgan D.O."/>
        </authorList>
    </citation>
    <scope>PHOSPHORYLATION [LARGE SCALE ANALYSIS] AT SER-77</scope>
    <scope>IDENTIFICATION BY MASS SPECTROMETRY [LARGE SCALE ANALYSIS]</scope>
</reference>
<reference key="7">
    <citation type="journal article" date="2012" name="PLoS ONE">
        <title>Paralogous ALT1 and ALT2 retention and diversification have generated catalytically active and inactive aminotransferases in Saccharomyces cerevisiae.</title>
        <authorList>
            <person name="Penalosa-Ruiz G."/>
            <person name="Aranda C."/>
            <person name="Ongay-Larios L."/>
            <person name="Colon M."/>
            <person name="Quezada H."/>
            <person name="Gonzalez A."/>
        </authorList>
    </citation>
    <scope>FUNCTION</scope>
    <scope>INDUCTION</scope>
</reference>
<reference key="8">
    <citation type="journal article" date="2018" name="Front. Microbiol.">
        <title>Saccharomyces cerevisiae differential functionalization of presumed ScALT1 and ScALT2 alanine transaminases has been driven by diversification of pyridoxal phosphate interactions.</title>
        <authorList>
            <person name="Rojas-Ortega E."/>
            <person name="Aguirre-Lopez B."/>
            <person name="Reyes-Vivas H."/>
            <person name="Gonzalez-Andrade M."/>
            <person name="Campero-Basaldua J.C."/>
            <person name="Pardo J.P."/>
            <person name="Gonzalez A."/>
        </authorList>
    </citation>
    <scope>FUNCTION</scope>
    <scope>COFACTOR</scope>
    <scope>SUBUNIT</scope>
</reference>
<protein>
    <recommendedName>
        <fullName>Alanine aminotransferase, mitochondrial</fullName>
        <ecNumber>2.6.1.2</ecNumber>
    </recommendedName>
    <alternativeName>
        <fullName>Glutamate pyruvate transaminase</fullName>
        <shortName>GPT</shortName>
    </alternativeName>
    <alternativeName>
        <fullName>Glutamic--alanine transaminase</fullName>
    </alternativeName>
    <alternativeName>
        <fullName>Glutamic--pyruvic transaminase</fullName>
    </alternativeName>
</protein>
<accession>P52893</accession>
<accession>D6VY89</accession>
<name>ALAT1_YEAST</name>
<proteinExistence type="evidence at protein level"/>
<dbReference type="EC" id="2.6.1.2"/>
<dbReference type="EMBL" id="U53880">
    <property type="protein sequence ID" value="AAB67593.1"/>
    <property type="molecule type" value="Genomic_DNA"/>
</dbReference>
<dbReference type="EMBL" id="Z73261">
    <property type="protein sequence ID" value="CAA97650.1"/>
    <property type="molecule type" value="Genomic_DNA"/>
</dbReference>
<dbReference type="EMBL" id="BK006945">
    <property type="protein sequence ID" value="DAA09405.1"/>
    <property type="molecule type" value="Genomic_DNA"/>
</dbReference>
<dbReference type="PIR" id="S64923">
    <property type="entry name" value="S64923"/>
</dbReference>
<dbReference type="RefSeq" id="NP_013190.1">
    <property type="nucleotide sequence ID" value="NM_001181976.1"/>
</dbReference>
<dbReference type="SMR" id="P52893"/>
<dbReference type="BioGRID" id="31362">
    <property type="interactions" value="456"/>
</dbReference>
<dbReference type="DIP" id="DIP-7654N"/>
<dbReference type="FunCoup" id="P52893">
    <property type="interactions" value="568"/>
</dbReference>
<dbReference type="IntAct" id="P52893">
    <property type="interactions" value="23"/>
</dbReference>
<dbReference type="MINT" id="P52893"/>
<dbReference type="STRING" id="4932.YLR089C"/>
<dbReference type="iPTMnet" id="P52893"/>
<dbReference type="PaxDb" id="4932-YLR089C"/>
<dbReference type="PeptideAtlas" id="P52893"/>
<dbReference type="EnsemblFungi" id="YLR089C_mRNA">
    <property type="protein sequence ID" value="YLR089C"/>
    <property type="gene ID" value="YLR089C"/>
</dbReference>
<dbReference type="GeneID" id="850778"/>
<dbReference type="KEGG" id="sce:YLR089C"/>
<dbReference type="AGR" id="SGD:S000004079"/>
<dbReference type="SGD" id="S000004079">
    <property type="gene designation" value="ALT1"/>
</dbReference>
<dbReference type="VEuPathDB" id="FungiDB:YLR089C"/>
<dbReference type="eggNOG" id="KOG0258">
    <property type="taxonomic scope" value="Eukaryota"/>
</dbReference>
<dbReference type="GeneTree" id="ENSGT00940000172095"/>
<dbReference type="HOGENOM" id="CLU_014254_3_0_1"/>
<dbReference type="InParanoid" id="P52893"/>
<dbReference type="OMA" id="FGFECPP"/>
<dbReference type="OrthoDB" id="1732682at2759"/>
<dbReference type="BioCyc" id="YEAST:YLR089C-MONOMER"/>
<dbReference type="BRENDA" id="2.6.1.2">
    <property type="organism ID" value="984"/>
</dbReference>
<dbReference type="Reactome" id="R-SCE-70268">
    <property type="pathway name" value="Pyruvate metabolism"/>
</dbReference>
<dbReference type="Reactome" id="R-SCE-8964540">
    <property type="pathway name" value="Alanine metabolism"/>
</dbReference>
<dbReference type="UniPathway" id="UPA00528">
    <property type="reaction ID" value="UER00586"/>
</dbReference>
<dbReference type="BioGRID-ORCS" id="850778">
    <property type="hits" value="5 hits in 10 CRISPR screens"/>
</dbReference>
<dbReference type="PRO" id="PR:P52893"/>
<dbReference type="Proteomes" id="UP000002311">
    <property type="component" value="Chromosome XII"/>
</dbReference>
<dbReference type="RNAct" id="P52893">
    <property type="molecule type" value="protein"/>
</dbReference>
<dbReference type="GO" id="GO:0005759">
    <property type="term" value="C:mitochondrial matrix"/>
    <property type="evidence" value="ECO:0007669"/>
    <property type="project" value="UniProtKB-SubCell"/>
</dbReference>
<dbReference type="GO" id="GO:0005739">
    <property type="term" value="C:mitochondrion"/>
    <property type="evidence" value="ECO:0000314"/>
    <property type="project" value="SGD"/>
</dbReference>
<dbReference type="GO" id="GO:0004021">
    <property type="term" value="F:L-alanine:2-oxoglutarate aminotransferase activity"/>
    <property type="evidence" value="ECO:0000315"/>
    <property type="project" value="SGD"/>
</dbReference>
<dbReference type="GO" id="GO:0030170">
    <property type="term" value="F:pyridoxal phosphate binding"/>
    <property type="evidence" value="ECO:0000314"/>
    <property type="project" value="SGD"/>
</dbReference>
<dbReference type="GO" id="GO:0006523">
    <property type="term" value="P:alanine biosynthetic process"/>
    <property type="evidence" value="ECO:0000315"/>
    <property type="project" value="SGD"/>
</dbReference>
<dbReference type="GO" id="GO:0006524">
    <property type="term" value="P:alanine catabolic process"/>
    <property type="evidence" value="ECO:0000315"/>
    <property type="project" value="SGD"/>
</dbReference>
<dbReference type="GO" id="GO:0042853">
    <property type="term" value="P:L-alanine catabolic process"/>
    <property type="evidence" value="ECO:0007669"/>
    <property type="project" value="UniProtKB-UniPathway"/>
</dbReference>
<dbReference type="CDD" id="cd00609">
    <property type="entry name" value="AAT_like"/>
    <property type="match status" value="1"/>
</dbReference>
<dbReference type="FunFam" id="1.10.287.1970:FF:000001">
    <property type="entry name" value="Alanine aminotransferase 2"/>
    <property type="match status" value="1"/>
</dbReference>
<dbReference type="FunFam" id="3.90.1150.10:FF:000010">
    <property type="entry name" value="Alanine aminotransferase 2"/>
    <property type="match status" value="1"/>
</dbReference>
<dbReference type="FunFam" id="3.40.640.10:FF:000012">
    <property type="entry name" value="alanine aminotransferase 2"/>
    <property type="match status" value="1"/>
</dbReference>
<dbReference type="Gene3D" id="1.10.287.1970">
    <property type="match status" value="1"/>
</dbReference>
<dbReference type="Gene3D" id="3.90.1150.10">
    <property type="entry name" value="Aspartate Aminotransferase, domain 1"/>
    <property type="match status" value="1"/>
</dbReference>
<dbReference type="Gene3D" id="3.40.640.10">
    <property type="entry name" value="Type I PLP-dependent aspartate aminotransferase-like (Major domain)"/>
    <property type="match status" value="1"/>
</dbReference>
<dbReference type="InterPro" id="IPR045088">
    <property type="entry name" value="ALAT1/2-like"/>
</dbReference>
<dbReference type="InterPro" id="IPR004839">
    <property type="entry name" value="Aminotransferase_I/II_large"/>
</dbReference>
<dbReference type="InterPro" id="IPR015424">
    <property type="entry name" value="PyrdxlP-dep_Trfase"/>
</dbReference>
<dbReference type="InterPro" id="IPR015421">
    <property type="entry name" value="PyrdxlP-dep_Trfase_major"/>
</dbReference>
<dbReference type="InterPro" id="IPR015422">
    <property type="entry name" value="PyrdxlP-dep_Trfase_small"/>
</dbReference>
<dbReference type="PANTHER" id="PTHR11751">
    <property type="entry name" value="ALANINE AMINOTRANSFERASE"/>
    <property type="match status" value="1"/>
</dbReference>
<dbReference type="PANTHER" id="PTHR11751:SF29">
    <property type="entry name" value="ALANINE TRANSAMINASE"/>
    <property type="match status" value="1"/>
</dbReference>
<dbReference type="Pfam" id="PF00155">
    <property type="entry name" value="Aminotran_1_2"/>
    <property type="match status" value="1"/>
</dbReference>
<dbReference type="SUPFAM" id="SSF53383">
    <property type="entry name" value="PLP-dependent transferases"/>
    <property type="match status" value="1"/>
</dbReference>
<evidence type="ECO:0000250" key="1">
    <source>
        <dbReference type="UniProtKB" id="Q8TD30"/>
    </source>
</evidence>
<evidence type="ECO:0000255" key="2"/>
<evidence type="ECO:0000269" key="3">
    <source>
    </source>
</evidence>
<evidence type="ECO:0000269" key="4">
    <source>
    </source>
</evidence>
<evidence type="ECO:0000269" key="5">
    <source>
    </source>
</evidence>
<evidence type="ECO:0000269" key="6">
    <source>
    </source>
</evidence>
<evidence type="ECO:0000269" key="7">
    <source>
    </source>
</evidence>
<evidence type="ECO:0000305" key="8"/>
<evidence type="ECO:0000305" key="9">
    <source>
    </source>
</evidence>
<evidence type="ECO:0007744" key="10">
    <source>
    </source>
</evidence>
<organism>
    <name type="scientific">Saccharomyces cerevisiae (strain ATCC 204508 / S288c)</name>
    <name type="common">Baker's yeast</name>
    <dbReference type="NCBI Taxonomy" id="559292"/>
    <lineage>
        <taxon>Eukaryota</taxon>
        <taxon>Fungi</taxon>
        <taxon>Dikarya</taxon>
        <taxon>Ascomycota</taxon>
        <taxon>Saccharomycotina</taxon>
        <taxon>Saccharomycetes</taxon>
        <taxon>Saccharomycetales</taxon>
        <taxon>Saccharomycetaceae</taxon>
        <taxon>Saccharomyces</taxon>
    </lineage>
</organism>
<keyword id="KW-0032">Aminotransferase</keyword>
<keyword id="KW-0496">Mitochondrion</keyword>
<keyword id="KW-0597">Phosphoprotein</keyword>
<keyword id="KW-0663">Pyridoxal phosphate</keyword>
<keyword id="KW-1185">Reference proteome</keyword>
<keyword id="KW-0808">Transferase</keyword>
<keyword id="KW-0809">Transit peptide</keyword>
<feature type="transit peptide" description="Mitochondrion" evidence="2">
    <location>
        <begin position="1"/>
        <end position="64"/>
    </location>
</feature>
<feature type="chain" id="PRO_0000001220" description="Alanine aminotransferase, mitochondrial">
    <location>
        <begin position="65"/>
        <end position="592"/>
    </location>
</feature>
<feature type="binding site" evidence="1">
    <location>
        <position position="258"/>
    </location>
    <ligand>
        <name>pyridoxal 5'-phosphate</name>
        <dbReference type="ChEBI" id="CHEBI:597326"/>
    </ligand>
</feature>
<feature type="binding site" evidence="1">
    <location>
        <position position="259"/>
    </location>
    <ligand>
        <name>pyridoxal 5'-phosphate</name>
        <dbReference type="ChEBI" id="CHEBI:597326"/>
    </ligand>
</feature>
<feature type="binding site" evidence="1">
    <location>
        <position position="284"/>
    </location>
    <ligand>
        <name>pyridoxal 5'-phosphate</name>
        <dbReference type="ChEBI" id="CHEBI:597326"/>
    </ligand>
</feature>
<feature type="binding site" evidence="1">
    <location>
        <position position="340"/>
    </location>
    <ligand>
        <name>pyridoxal 5'-phosphate</name>
        <dbReference type="ChEBI" id="CHEBI:597326"/>
    </ligand>
</feature>
<feature type="binding site" evidence="1">
    <location>
        <position position="409"/>
    </location>
    <ligand>
        <name>pyridoxal 5'-phosphate</name>
        <dbReference type="ChEBI" id="CHEBI:597326"/>
    </ligand>
</feature>
<feature type="binding site" evidence="1">
    <location>
        <position position="421"/>
    </location>
    <ligand>
        <name>pyridoxal 5'-phosphate</name>
        <dbReference type="ChEBI" id="CHEBI:597326"/>
    </ligand>
</feature>
<feature type="modified residue" description="Phosphoserine" evidence="10">
    <location>
        <position position="77"/>
    </location>
</feature>
<feature type="modified residue" description="N6-(pyridoxal phosphate)lysine" evidence="1">
    <location>
        <position position="412"/>
    </location>
</feature>
<gene>
    <name type="primary">ALT1</name>
    <name type="ordered locus">YLR089C</name>
    <name type="ORF">L9449.15</name>
</gene>